<dbReference type="EC" id="2.8.1.13" evidence="1"/>
<dbReference type="EMBL" id="CP000903">
    <property type="protein sequence ID" value="ABY45402.1"/>
    <property type="molecule type" value="Genomic_DNA"/>
</dbReference>
<dbReference type="RefSeq" id="WP_002088752.1">
    <property type="nucleotide sequence ID" value="NC_010184.1"/>
</dbReference>
<dbReference type="SMR" id="A9VIM2"/>
<dbReference type="GeneID" id="66266034"/>
<dbReference type="KEGG" id="bwe:BcerKBAB4_4243"/>
<dbReference type="eggNOG" id="COG0482">
    <property type="taxonomic scope" value="Bacteria"/>
</dbReference>
<dbReference type="HOGENOM" id="CLU_035188_1_0_9"/>
<dbReference type="Proteomes" id="UP000002154">
    <property type="component" value="Chromosome"/>
</dbReference>
<dbReference type="GO" id="GO:0005737">
    <property type="term" value="C:cytoplasm"/>
    <property type="evidence" value="ECO:0007669"/>
    <property type="project" value="UniProtKB-SubCell"/>
</dbReference>
<dbReference type="GO" id="GO:0005524">
    <property type="term" value="F:ATP binding"/>
    <property type="evidence" value="ECO:0007669"/>
    <property type="project" value="UniProtKB-KW"/>
</dbReference>
<dbReference type="GO" id="GO:0000049">
    <property type="term" value="F:tRNA binding"/>
    <property type="evidence" value="ECO:0007669"/>
    <property type="project" value="UniProtKB-KW"/>
</dbReference>
<dbReference type="GO" id="GO:0103016">
    <property type="term" value="F:tRNA-uridine 2-sulfurtransferase activity"/>
    <property type="evidence" value="ECO:0007669"/>
    <property type="project" value="UniProtKB-EC"/>
</dbReference>
<dbReference type="GO" id="GO:0002143">
    <property type="term" value="P:tRNA wobble position uridine thiolation"/>
    <property type="evidence" value="ECO:0007669"/>
    <property type="project" value="TreeGrafter"/>
</dbReference>
<dbReference type="CDD" id="cd01998">
    <property type="entry name" value="MnmA_TRMU-like"/>
    <property type="match status" value="1"/>
</dbReference>
<dbReference type="FunFam" id="2.30.30.280:FF:000001">
    <property type="entry name" value="tRNA-specific 2-thiouridylase MnmA"/>
    <property type="match status" value="1"/>
</dbReference>
<dbReference type="FunFam" id="2.40.30.10:FF:000023">
    <property type="entry name" value="tRNA-specific 2-thiouridylase MnmA"/>
    <property type="match status" value="1"/>
</dbReference>
<dbReference type="FunFam" id="3.40.50.620:FF:000004">
    <property type="entry name" value="tRNA-specific 2-thiouridylase MnmA"/>
    <property type="match status" value="1"/>
</dbReference>
<dbReference type="Gene3D" id="2.30.30.280">
    <property type="entry name" value="Adenine nucleotide alpha hydrolases-like domains"/>
    <property type="match status" value="1"/>
</dbReference>
<dbReference type="Gene3D" id="3.40.50.620">
    <property type="entry name" value="HUPs"/>
    <property type="match status" value="1"/>
</dbReference>
<dbReference type="Gene3D" id="2.40.30.10">
    <property type="entry name" value="Translation factors"/>
    <property type="match status" value="1"/>
</dbReference>
<dbReference type="HAMAP" id="MF_00144">
    <property type="entry name" value="tRNA_thiouridyl_MnmA"/>
    <property type="match status" value="1"/>
</dbReference>
<dbReference type="InterPro" id="IPR004506">
    <property type="entry name" value="MnmA-like"/>
</dbReference>
<dbReference type="InterPro" id="IPR046885">
    <property type="entry name" value="MnmA-like_C"/>
</dbReference>
<dbReference type="InterPro" id="IPR046884">
    <property type="entry name" value="MnmA-like_central"/>
</dbReference>
<dbReference type="InterPro" id="IPR023382">
    <property type="entry name" value="MnmA-like_central_sf"/>
</dbReference>
<dbReference type="InterPro" id="IPR014729">
    <property type="entry name" value="Rossmann-like_a/b/a_fold"/>
</dbReference>
<dbReference type="NCBIfam" id="NF001138">
    <property type="entry name" value="PRK00143.1"/>
    <property type="match status" value="1"/>
</dbReference>
<dbReference type="NCBIfam" id="TIGR00420">
    <property type="entry name" value="trmU"/>
    <property type="match status" value="1"/>
</dbReference>
<dbReference type="PANTHER" id="PTHR11933:SF5">
    <property type="entry name" value="MITOCHONDRIAL TRNA-SPECIFIC 2-THIOURIDYLASE 1"/>
    <property type="match status" value="1"/>
</dbReference>
<dbReference type="PANTHER" id="PTHR11933">
    <property type="entry name" value="TRNA 5-METHYLAMINOMETHYL-2-THIOURIDYLATE -METHYLTRANSFERASE"/>
    <property type="match status" value="1"/>
</dbReference>
<dbReference type="Pfam" id="PF03054">
    <property type="entry name" value="tRNA_Me_trans"/>
    <property type="match status" value="1"/>
</dbReference>
<dbReference type="Pfam" id="PF20258">
    <property type="entry name" value="tRNA_Me_trans_C"/>
    <property type="match status" value="1"/>
</dbReference>
<dbReference type="Pfam" id="PF20259">
    <property type="entry name" value="tRNA_Me_trans_M"/>
    <property type="match status" value="1"/>
</dbReference>
<dbReference type="SUPFAM" id="SSF52402">
    <property type="entry name" value="Adenine nucleotide alpha hydrolases-like"/>
    <property type="match status" value="1"/>
</dbReference>
<keyword id="KW-0067">ATP-binding</keyword>
<keyword id="KW-0963">Cytoplasm</keyword>
<keyword id="KW-1015">Disulfide bond</keyword>
<keyword id="KW-0547">Nucleotide-binding</keyword>
<keyword id="KW-0694">RNA-binding</keyword>
<keyword id="KW-0808">Transferase</keyword>
<keyword id="KW-0819">tRNA processing</keyword>
<keyword id="KW-0820">tRNA-binding</keyword>
<comment type="function">
    <text evidence="1">Catalyzes the 2-thiolation of uridine at the wobble position (U34) of tRNA, leading to the formation of s(2)U34.</text>
</comment>
<comment type="catalytic activity">
    <reaction evidence="1">
        <text>S-sulfanyl-L-cysteinyl-[protein] + uridine(34) in tRNA + AH2 + ATP = 2-thiouridine(34) in tRNA + L-cysteinyl-[protein] + A + AMP + diphosphate + H(+)</text>
        <dbReference type="Rhea" id="RHEA:47032"/>
        <dbReference type="Rhea" id="RHEA-COMP:10131"/>
        <dbReference type="Rhea" id="RHEA-COMP:11726"/>
        <dbReference type="Rhea" id="RHEA-COMP:11727"/>
        <dbReference type="Rhea" id="RHEA-COMP:11728"/>
        <dbReference type="ChEBI" id="CHEBI:13193"/>
        <dbReference type="ChEBI" id="CHEBI:15378"/>
        <dbReference type="ChEBI" id="CHEBI:17499"/>
        <dbReference type="ChEBI" id="CHEBI:29950"/>
        <dbReference type="ChEBI" id="CHEBI:30616"/>
        <dbReference type="ChEBI" id="CHEBI:33019"/>
        <dbReference type="ChEBI" id="CHEBI:61963"/>
        <dbReference type="ChEBI" id="CHEBI:65315"/>
        <dbReference type="ChEBI" id="CHEBI:87170"/>
        <dbReference type="ChEBI" id="CHEBI:456215"/>
        <dbReference type="EC" id="2.8.1.13"/>
    </reaction>
</comment>
<comment type="subcellular location">
    <subcellularLocation>
        <location evidence="1">Cytoplasm</location>
    </subcellularLocation>
</comment>
<comment type="similarity">
    <text evidence="1">Belongs to the MnmA/TRMU family.</text>
</comment>
<gene>
    <name evidence="1" type="primary">mnmA</name>
    <name type="ordered locus">BcerKBAB4_4243</name>
</gene>
<feature type="chain" id="PRO_0000349520" description="tRNA-specific 2-thiouridylase MnmA">
    <location>
        <begin position="1"/>
        <end position="371"/>
    </location>
</feature>
<feature type="region of interest" description="Interaction with target base in tRNA" evidence="1">
    <location>
        <begin position="99"/>
        <end position="101"/>
    </location>
</feature>
<feature type="region of interest" description="Interaction with tRNA" evidence="1">
    <location>
        <begin position="150"/>
        <end position="152"/>
    </location>
</feature>
<feature type="region of interest" description="Interaction with tRNA" evidence="1">
    <location>
        <begin position="308"/>
        <end position="309"/>
    </location>
</feature>
<feature type="active site" description="Nucleophile" evidence="1">
    <location>
        <position position="104"/>
    </location>
</feature>
<feature type="active site" description="Cysteine persulfide intermediate" evidence="1">
    <location>
        <position position="200"/>
    </location>
</feature>
<feature type="binding site" evidence="1">
    <location>
        <begin position="13"/>
        <end position="20"/>
    </location>
    <ligand>
        <name>ATP</name>
        <dbReference type="ChEBI" id="CHEBI:30616"/>
    </ligand>
</feature>
<feature type="binding site" evidence="1">
    <location>
        <position position="39"/>
    </location>
    <ligand>
        <name>ATP</name>
        <dbReference type="ChEBI" id="CHEBI:30616"/>
    </ligand>
</feature>
<feature type="binding site" evidence="1">
    <location>
        <position position="128"/>
    </location>
    <ligand>
        <name>ATP</name>
        <dbReference type="ChEBI" id="CHEBI:30616"/>
    </ligand>
</feature>
<feature type="site" description="Interaction with tRNA" evidence="1">
    <location>
        <position position="129"/>
    </location>
</feature>
<feature type="site" description="Interaction with tRNA" evidence="1">
    <location>
        <position position="341"/>
    </location>
</feature>
<feature type="disulfide bond" description="Alternate" evidence="1">
    <location>
        <begin position="104"/>
        <end position="200"/>
    </location>
</feature>
<proteinExistence type="inferred from homology"/>
<reference key="1">
    <citation type="journal article" date="2008" name="Chem. Biol. Interact.">
        <title>Extending the Bacillus cereus group genomics to putative food-borne pathogens of different toxicity.</title>
        <authorList>
            <person name="Lapidus A."/>
            <person name="Goltsman E."/>
            <person name="Auger S."/>
            <person name="Galleron N."/>
            <person name="Segurens B."/>
            <person name="Dossat C."/>
            <person name="Land M.L."/>
            <person name="Broussolle V."/>
            <person name="Brillard J."/>
            <person name="Guinebretiere M.-H."/>
            <person name="Sanchis V."/>
            <person name="Nguen-the C."/>
            <person name="Lereclus D."/>
            <person name="Richardson P."/>
            <person name="Wincker P."/>
            <person name="Weissenbach J."/>
            <person name="Ehrlich S.D."/>
            <person name="Sorokin A."/>
        </authorList>
    </citation>
    <scope>NUCLEOTIDE SEQUENCE [LARGE SCALE GENOMIC DNA]</scope>
    <source>
        <strain>KBAB4</strain>
    </source>
</reference>
<name>MNMA_BACMK</name>
<evidence type="ECO:0000255" key="1">
    <source>
        <dbReference type="HAMAP-Rule" id="MF_00144"/>
    </source>
</evidence>
<sequence>MNKLPQETRVVIGMSGGVDSSVAALLLKEQGYDVIGIFMKNWDDTDANGVCTATEDYNDVIEVCNQIGIPYYAVNFEKQYWDKVFTYFLDEYRAGRTPNPDVMCNKEIKFKAFLEHAIALGADYVATGHYARVAYMDGEYKMLRGVDDNKDQTYFLNQLSQEQLSKTMFPLGELKKPQIREMATEAGLATAAKKDSTGICFIGERNFKDFLSNYLPAQPGVMQTLSGEVKGKHDGLMYYTIGQRHGLGIGGNGDPWFAVGKNLKENILYVDQGFHNELLYGDEVIATNVGWVSNKAKEKEFTCTAKFRYRQADNKVTVQIVDENTVRILCDEPIRAITPGQAVVFYDGDECLGGATIDEVYHSGKKLDYLG</sequence>
<organism>
    <name type="scientific">Bacillus mycoides (strain KBAB4)</name>
    <name type="common">Bacillus weihenstephanensis</name>
    <dbReference type="NCBI Taxonomy" id="315730"/>
    <lineage>
        <taxon>Bacteria</taxon>
        <taxon>Bacillati</taxon>
        <taxon>Bacillota</taxon>
        <taxon>Bacilli</taxon>
        <taxon>Bacillales</taxon>
        <taxon>Bacillaceae</taxon>
        <taxon>Bacillus</taxon>
        <taxon>Bacillus cereus group</taxon>
    </lineage>
</organism>
<accession>A9VIM2</accession>
<protein>
    <recommendedName>
        <fullName evidence="1">tRNA-specific 2-thiouridylase MnmA</fullName>
        <ecNumber evidence="1">2.8.1.13</ecNumber>
    </recommendedName>
</protein>